<proteinExistence type="inferred from homology"/>
<name>SYR_BACFR</name>
<protein>
    <recommendedName>
        <fullName evidence="1">Arginine--tRNA ligase</fullName>
        <ecNumber evidence="1">6.1.1.19</ecNumber>
    </recommendedName>
    <alternativeName>
        <fullName evidence="1">Arginyl-tRNA synthetase</fullName>
        <shortName evidence="1">ArgRS</shortName>
    </alternativeName>
</protein>
<keyword id="KW-0030">Aminoacyl-tRNA synthetase</keyword>
<keyword id="KW-0067">ATP-binding</keyword>
<keyword id="KW-0963">Cytoplasm</keyword>
<keyword id="KW-0436">Ligase</keyword>
<keyword id="KW-0547">Nucleotide-binding</keyword>
<keyword id="KW-0648">Protein biosynthesis</keyword>
<dbReference type="EC" id="6.1.1.19" evidence="1"/>
<dbReference type="EMBL" id="AP006841">
    <property type="protein sequence ID" value="BAD51159.1"/>
    <property type="molecule type" value="Genomic_DNA"/>
</dbReference>
<dbReference type="RefSeq" id="WP_005797416.1">
    <property type="nucleotide sequence ID" value="NC_006347.1"/>
</dbReference>
<dbReference type="RefSeq" id="YP_101693.1">
    <property type="nucleotide sequence ID" value="NC_006347.1"/>
</dbReference>
<dbReference type="SMR" id="Q64MX8"/>
<dbReference type="STRING" id="295405.BF4421"/>
<dbReference type="KEGG" id="bfr:BF4421"/>
<dbReference type="PATRIC" id="fig|295405.11.peg.4263"/>
<dbReference type="HOGENOM" id="CLU_006406_6_1_10"/>
<dbReference type="OrthoDB" id="9805987at2"/>
<dbReference type="Proteomes" id="UP000002197">
    <property type="component" value="Chromosome"/>
</dbReference>
<dbReference type="GO" id="GO:0005737">
    <property type="term" value="C:cytoplasm"/>
    <property type="evidence" value="ECO:0007669"/>
    <property type="project" value="UniProtKB-SubCell"/>
</dbReference>
<dbReference type="GO" id="GO:0004814">
    <property type="term" value="F:arginine-tRNA ligase activity"/>
    <property type="evidence" value="ECO:0007669"/>
    <property type="project" value="UniProtKB-UniRule"/>
</dbReference>
<dbReference type="GO" id="GO:0005524">
    <property type="term" value="F:ATP binding"/>
    <property type="evidence" value="ECO:0007669"/>
    <property type="project" value="UniProtKB-UniRule"/>
</dbReference>
<dbReference type="GO" id="GO:0006420">
    <property type="term" value="P:arginyl-tRNA aminoacylation"/>
    <property type="evidence" value="ECO:0007669"/>
    <property type="project" value="UniProtKB-UniRule"/>
</dbReference>
<dbReference type="FunFam" id="3.40.50.620:FF:000125">
    <property type="entry name" value="Arginine--tRNA ligase"/>
    <property type="match status" value="1"/>
</dbReference>
<dbReference type="Gene3D" id="3.30.1360.70">
    <property type="entry name" value="Arginyl tRNA synthetase N-terminal domain"/>
    <property type="match status" value="1"/>
</dbReference>
<dbReference type="Gene3D" id="3.40.50.620">
    <property type="entry name" value="HUPs"/>
    <property type="match status" value="1"/>
</dbReference>
<dbReference type="Gene3D" id="1.10.730.10">
    <property type="entry name" value="Isoleucyl-tRNA Synthetase, Domain 1"/>
    <property type="match status" value="1"/>
</dbReference>
<dbReference type="HAMAP" id="MF_00123">
    <property type="entry name" value="Arg_tRNA_synth"/>
    <property type="match status" value="1"/>
</dbReference>
<dbReference type="InterPro" id="IPR001412">
    <property type="entry name" value="aa-tRNA-synth_I_CS"/>
</dbReference>
<dbReference type="InterPro" id="IPR001278">
    <property type="entry name" value="Arg-tRNA-ligase"/>
</dbReference>
<dbReference type="InterPro" id="IPR005148">
    <property type="entry name" value="Arg-tRNA-synth_N"/>
</dbReference>
<dbReference type="InterPro" id="IPR036695">
    <property type="entry name" value="Arg-tRNA-synth_N_sf"/>
</dbReference>
<dbReference type="InterPro" id="IPR035684">
    <property type="entry name" value="ArgRS_core"/>
</dbReference>
<dbReference type="InterPro" id="IPR008909">
    <property type="entry name" value="DALR_anticod-bd"/>
</dbReference>
<dbReference type="InterPro" id="IPR014729">
    <property type="entry name" value="Rossmann-like_a/b/a_fold"/>
</dbReference>
<dbReference type="InterPro" id="IPR009080">
    <property type="entry name" value="tRNAsynth_Ia_anticodon-bd"/>
</dbReference>
<dbReference type="NCBIfam" id="TIGR00456">
    <property type="entry name" value="argS"/>
    <property type="match status" value="1"/>
</dbReference>
<dbReference type="PANTHER" id="PTHR11956:SF5">
    <property type="entry name" value="ARGININE--TRNA LIGASE, CYTOPLASMIC"/>
    <property type="match status" value="1"/>
</dbReference>
<dbReference type="PANTHER" id="PTHR11956">
    <property type="entry name" value="ARGINYL-TRNA SYNTHETASE"/>
    <property type="match status" value="1"/>
</dbReference>
<dbReference type="Pfam" id="PF03485">
    <property type="entry name" value="Arg_tRNA_synt_N"/>
    <property type="match status" value="1"/>
</dbReference>
<dbReference type="Pfam" id="PF05746">
    <property type="entry name" value="DALR_1"/>
    <property type="match status" value="1"/>
</dbReference>
<dbReference type="Pfam" id="PF00750">
    <property type="entry name" value="tRNA-synt_1d"/>
    <property type="match status" value="1"/>
</dbReference>
<dbReference type="PRINTS" id="PR01038">
    <property type="entry name" value="TRNASYNTHARG"/>
</dbReference>
<dbReference type="SMART" id="SM01016">
    <property type="entry name" value="Arg_tRNA_synt_N"/>
    <property type="match status" value="1"/>
</dbReference>
<dbReference type="SMART" id="SM00836">
    <property type="entry name" value="DALR_1"/>
    <property type="match status" value="1"/>
</dbReference>
<dbReference type="SUPFAM" id="SSF47323">
    <property type="entry name" value="Anticodon-binding domain of a subclass of class I aminoacyl-tRNA synthetases"/>
    <property type="match status" value="1"/>
</dbReference>
<dbReference type="SUPFAM" id="SSF55190">
    <property type="entry name" value="Arginyl-tRNA synthetase (ArgRS), N-terminal 'additional' domain"/>
    <property type="match status" value="1"/>
</dbReference>
<dbReference type="SUPFAM" id="SSF52374">
    <property type="entry name" value="Nucleotidylyl transferase"/>
    <property type="match status" value="1"/>
</dbReference>
<dbReference type="PROSITE" id="PS00178">
    <property type="entry name" value="AA_TRNA_LIGASE_I"/>
    <property type="match status" value="1"/>
</dbReference>
<reference key="1">
    <citation type="journal article" date="2004" name="Proc. Natl. Acad. Sci. U.S.A.">
        <title>Genomic analysis of Bacteroides fragilis reveals extensive DNA inversions regulating cell surface adaptation.</title>
        <authorList>
            <person name="Kuwahara T."/>
            <person name="Yamashita A."/>
            <person name="Hirakawa H."/>
            <person name="Nakayama H."/>
            <person name="Toh H."/>
            <person name="Okada N."/>
            <person name="Kuhara S."/>
            <person name="Hattori M."/>
            <person name="Hayashi T."/>
            <person name="Ohnishi Y."/>
        </authorList>
    </citation>
    <scope>NUCLEOTIDE SEQUENCE [LARGE SCALE GENOMIC DNA]</scope>
    <source>
        <strain>YCH46</strain>
    </source>
</reference>
<comment type="catalytic activity">
    <reaction evidence="1">
        <text>tRNA(Arg) + L-arginine + ATP = L-arginyl-tRNA(Arg) + AMP + diphosphate</text>
        <dbReference type="Rhea" id="RHEA:20301"/>
        <dbReference type="Rhea" id="RHEA-COMP:9658"/>
        <dbReference type="Rhea" id="RHEA-COMP:9673"/>
        <dbReference type="ChEBI" id="CHEBI:30616"/>
        <dbReference type="ChEBI" id="CHEBI:32682"/>
        <dbReference type="ChEBI" id="CHEBI:33019"/>
        <dbReference type="ChEBI" id="CHEBI:78442"/>
        <dbReference type="ChEBI" id="CHEBI:78513"/>
        <dbReference type="ChEBI" id="CHEBI:456215"/>
        <dbReference type="EC" id="6.1.1.19"/>
    </reaction>
</comment>
<comment type="subunit">
    <text evidence="1">Monomer.</text>
</comment>
<comment type="subcellular location">
    <subcellularLocation>
        <location evidence="1">Cytoplasm</location>
    </subcellularLocation>
</comment>
<comment type="similarity">
    <text evidence="1">Belongs to the class-I aminoacyl-tRNA synthetase family.</text>
</comment>
<accession>Q64MX8</accession>
<gene>
    <name evidence="1" type="primary">argS</name>
    <name type="ordered locus">BF4421</name>
</gene>
<feature type="chain" id="PRO_0000241986" description="Arginine--tRNA ligase">
    <location>
        <begin position="1"/>
        <end position="597"/>
    </location>
</feature>
<feature type="short sequence motif" description="'HIGH' region">
    <location>
        <begin position="125"/>
        <end position="135"/>
    </location>
</feature>
<organism>
    <name type="scientific">Bacteroides fragilis (strain YCH46)</name>
    <dbReference type="NCBI Taxonomy" id="295405"/>
    <lineage>
        <taxon>Bacteria</taxon>
        <taxon>Pseudomonadati</taxon>
        <taxon>Bacteroidota</taxon>
        <taxon>Bacteroidia</taxon>
        <taxon>Bacteroidales</taxon>
        <taxon>Bacteroidaceae</taxon>
        <taxon>Bacteroides</taxon>
    </lineage>
</organism>
<sequence>MKIEDKLVTSVISGLKALYGQDVPAAQVQLQKTKKEFEGHLTLVVFPFLKMSKKGPEQTAQEIGEYLKANEPAVAAFNVIKGFLNLTVASATWIELLNEIHADAQYGIVSADENAPLVMIEYSSPNTNKPLHLGHVRNNLLGNALANIVMANGNKVVKTNIVNDRGIHICKSMLAWQKYGKGETPESSGKKGDHLVGDYYVAFDKHYKAEVAELMEKGMSKEEAEAASPLMNEAREMLVKWEAGDPEVRALWQMMNNWVYTGFDETYRKMGVGFDKIYYESNTYLEGKEKVMEGLEKGFFFKKEDGSVWADLTAEGLDHKLLLRGDGTSVYMTQDIGTAKLRFADYPIDKMIYVVGNEQNYHFQVLSILLDKLGFEWGKSLVHFSYGMVELPEGKMKSREGTVVDADDLMAEMIATAKETSQELGKLDGLTQEEADDIARIVGLGALKYFILKVDARKNMTFNPKESIDFNGNTGPFIQYTYARIRSVLRKAAEAGIVIPEVLPANIELSEKEEGLIQMVADFAAVVRQAGEDYSPSGIANYVYDLVKEYNQFYHDFSILREENEDVKLFRIALSANIAKVVRLGMGLLGIEVPDRM</sequence>
<evidence type="ECO:0000255" key="1">
    <source>
        <dbReference type="HAMAP-Rule" id="MF_00123"/>
    </source>
</evidence>